<evidence type="ECO:0000250" key="1"/>
<evidence type="ECO:0000255" key="2"/>
<evidence type="ECO:0000305" key="3"/>
<sequence length="206" mass="24558">MGKIFFLGLLSICIFLVFFFYKQKVNNVIYNKIVEKFEDNVFIDETYTYLFKDSNLKELVFIKSQLIVPEFENKNMMKATGYLADAYRALSTVYKFDFKVHDNKILGFKSVIFEGFEDARVSKHENNLPGEKWQQLKDFNIGDPNVNEKFFHLEFPFVVKNTLCVTISKRFFKKIKKLKRLKIVLISNEDREYKIDIENFLPKYNL</sequence>
<proteinExistence type="inferred from homology"/>
<comment type="function">
    <text evidence="1">Virulence-associated protein essential for survival of the bacterium within the tick host and therefore within the natural life cycle of the spirochete.</text>
</comment>
<comment type="subcellular location">
    <subcellularLocation>
        <location evidence="3">Cell outer membrane</location>
    </subcellularLocation>
</comment>
<comment type="similarity">
    <text evidence="3">Belongs to the BptA family.</text>
</comment>
<accession>Q56NG8</accession>
<protein>
    <recommendedName>
        <fullName>Protein BptA</fullName>
    </recommendedName>
    <alternativeName>
        <fullName>Borrelial persistence in ticks protein A</fullName>
    </alternativeName>
</protein>
<keyword id="KW-0998">Cell outer membrane</keyword>
<keyword id="KW-0472">Membrane</keyword>
<keyword id="KW-0732">Signal</keyword>
<keyword id="KW-0843">Virulence</keyword>
<feature type="signal peptide" evidence="2">
    <location>
        <begin position="1"/>
        <end position="19"/>
    </location>
</feature>
<feature type="chain" id="PRO_0000240470" description="Protein BptA">
    <location>
        <begin position="20"/>
        <end position="206"/>
    </location>
</feature>
<gene>
    <name type="primary">bptA</name>
</gene>
<reference key="1">
    <citation type="journal article" date="2005" name="Proc. Natl. Acad. Sci. U.S.A.">
        <title>bptA (bbe16) is essential for the persistence of the Lyme disease spirochete, Borrelia burgdorferi, in its natural tick vector.</title>
        <authorList>
            <person name="Revel A.T."/>
            <person name="Blevins J.S."/>
            <person name="Almazan C."/>
            <person name="Neil L."/>
            <person name="Kocan K.M."/>
            <person name="de la Fuente J."/>
            <person name="Hagman K.E."/>
            <person name="Norgard M.V."/>
        </authorList>
    </citation>
    <scope>NUCLEOTIDE SEQUENCE [GENOMIC DNA]</scope>
    <source>
        <strain>ATCC 700555 / 21038</strain>
    </source>
</reference>
<organism>
    <name type="scientific">Borrelia andersonii</name>
    <name type="common">Borreliella andersonii</name>
    <dbReference type="NCBI Taxonomy" id="42109"/>
    <lineage>
        <taxon>Bacteria</taxon>
        <taxon>Pseudomonadati</taxon>
        <taxon>Spirochaetota</taxon>
        <taxon>Spirochaetia</taxon>
        <taxon>Spirochaetales</taxon>
        <taxon>Borreliaceae</taxon>
        <taxon>Borreliella</taxon>
    </lineage>
</organism>
<dbReference type="EMBL" id="AY894350">
    <property type="protein sequence ID" value="AAX69077.1"/>
    <property type="molecule type" value="Genomic_DNA"/>
</dbReference>
<dbReference type="GO" id="GO:0009279">
    <property type="term" value="C:cell outer membrane"/>
    <property type="evidence" value="ECO:0007669"/>
    <property type="project" value="UniProtKB-SubCell"/>
</dbReference>
<dbReference type="InterPro" id="IPR031471">
    <property type="entry name" value="BptA"/>
</dbReference>
<dbReference type="NCBIfam" id="NF045772">
    <property type="entry name" value="VirAssocBptA"/>
    <property type="match status" value="1"/>
</dbReference>
<dbReference type="Pfam" id="PF17044">
    <property type="entry name" value="BPTA"/>
    <property type="match status" value="1"/>
</dbReference>
<name>BPTA_BORAD</name>